<protein>
    <recommendedName>
        <fullName evidence="9">ABC multidrug transporter MDR2</fullName>
    </recommendedName>
    <alternativeName>
        <fullName evidence="9">Multidrug resistance protein 2</fullName>
    </alternativeName>
</protein>
<comment type="function">
    <text evidence="7 8">ABC-type efflux transporter involved in the modulation susceptibility to itraconazole.</text>
</comment>
<comment type="catalytic activity">
    <reaction evidence="7 8">
        <text>itraconazole(in) + ATP + H2O = itraconazole(out) + ADP + phosphate + H(+)</text>
        <dbReference type="Rhea" id="RHEA:33503"/>
        <dbReference type="ChEBI" id="CHEBI:6076"/>
        <dbReference type="ChEBI" id="CHEBI:15377"/>
        <dbReference type="ChEBI" id="CHEBI:15378"/>
        <dbReference type="ChEBI" id="CHEBI:30616"/>
        <dbReference type="ChEBI" id="CHEBI:43474"/>
        <dbReference type="ChEBI" id="CHEBI:456216"/>
    </reaction>
    <physiologicalReaction direction="left-to-right" evidence="7">
        <dbReference type="Rhea" id="RHEA:33504"/>
    </physiologicalReaction>
</comment>
<comment type="subcellular location">
    <subcellularLocation>
        <location evidence="11">Cell membrane</location>
        <topology evidence="1">Multi-pass membrane protein</topology>
    </subcellularLocation>
</comment>
<comment type="induction">
    <text evidence="6 7">Expression is induced upon exposure to amphotericin B, the allylamine terbinafine, and itraconazole (PubMed:27121717, PubMed:31501141). Is highly over-expressed in strain TIMM20092, and azole-resistant strain isolated in Switzerland (PubMed:31501141).</text>
</comment>
<comment type="disruption phenotype">
    <text evidence="8">Impairs the resistance to itraconazole of the azole-resistant strain TIMM20092.</text>
</comment>
<comment type="miscellaneous">
    <text evidence="7 8">Dermatophytes showing reduced sensitivity to antifungal agents have emerged in several countries and, in particular, up-regulation of MDR2 expression in some clinical isolates such as strain TIMM20092 leads to increased resistance to itraconazole during clinical treatments.</text>
</comment>
<comment type="similarity">
    <text evidence="10">Belongs to the ABC transporter superfamily. ABCB family. Multidrug resistance exporter (TC 3.A.1.201) subfamily.</text>
</comment>
<reference key="1">
    <citation type="journal article" date="2012" name="MBio">
        <title>Comparative genome analysis of Trichophyton rubrum and related dermatophytes reveals candidate genes involved in infection.</title>
        <authorList>
            <person name="Martinez D.A."/>
            <person name="Oliver B.G."/>
            <person name="Graeser Y."/>
            <person name="Goldberg J.M."/>
            <person name="Li W."/>
            <person name="Martinez-Rossi N.M."/>
            <person name="Monod M."/>
            <person name="Shelest E."/>
            <person name="Barton R.C."/>
            <person name="Birch E."/>
            <person name="Brakhage A.A."/>
            <person name="Chen Z."/>
            <person name="Gurr S.J."/>
            <person name="Heiman D."/>
            <person name="Heitman J."/>
            <person name="Kosti I."/>
            <person name="Rossi A."/>
            <person name="Saif S."/>
            <person name="Samalova M."/>
            <person name="Saunders C.W."/>
            <person name="Shea T."/>
            <person name="Summerbell R.C."/>
            <person name="Xu J."/>
            <person name="Young S."/>
            <person name="Zeng Q."/>
            <person name="Birren B.W."/>
            <person name="Cuomo C.A."/>
            <person name="White T.C."/>
        </authorList>
    </citation>
    <scope>NUCLEOTIDE SEQUENCE [LARGE SCALE GENOMIC DNA]</scope>
    <source>
        <strain>ATCC MYA-4607 / CBS 118892</strain>
    </source>
</reference>
<reference key="2">
    <citation type="journal article" date="2016" name="J. Med. Microbiol.">
        <title>Compensatory expression of multidrug-resistance genes encoding ABC transporters in dermatophytes.</title>
        <authorList>
            <person name="Martins M.P."/>
            <person name="Franceschini A.C.C."/>
            <person name="Jacob T.R."/>
            <person name="Rossi A."/>
            <person name="Martinez-Rossi N.M."/>
        </authorList>
    </citation>
    <scope>INDUCTION</scope>
</reference>
<reference key="3">
    <citation type="journal article" date="2019" name="Antimicrob. Agents Chemother.">
        <title>Trichophyton rubrum azole resistance mediated by a new ABC transporter, TruMDR3.</title>
        <authorList>
            <person name="Monod M."/>
            <person name="Feuermann M."/>
            <person name="Salamin K."/>
            <person name="Fratti M."/>
            <person name="Makino M."/>
            <person name="Alshahni M.M."/>
            <person name="Makimura K."/>
            <person name="Yamada T."/>
        </authorList>
    </citation>
    <scope>FUNCTION</scope>
    <scope>INDUCTION</scope>
    <scope>CATALYTIC ACTIVITY</scope>
</reference>
<reference key="4">
    <citation type="journal article" date="2021" name="Mycoses">
        <title>Itraconazole resistance of Trichophyton rubrum mediated by the ABC transporter TruMDR2.</title>
        <authorList>
            <person name="Yamada T."/>
            <person name="Yaguchi T."/>
            <person name="Tamura T."/>
            <person name="Pich C."/>
            <person name="Salamin K."/>
            <person name="Feuermann M."/>
            <person name="Monod M."/>
        </authorList>
    </citation>
    <scope>FUNCTION</scope>
    <scope>DISRUPTION PHENOTYPE</scope>
    <scope>CATALYTIC ACTIVITY</scope>
</reference>
<evidence type="ECO:0000255" key="1"/>
<evidence type="ECO:0000255" key="2">
    <source>
        <dbReference type="PROSITE-ProRule" id="PRU00434"/>
    </source>
</evidence>
<evidence type="ECO:0000255" key="3">
    <source>
        <dbReference type="PROSITE-ProRule" id="PRU00441"/>
    </source>
</evidence>
<evidence type="ECO:0000255" key="4">
    <source>
        <dbReference type="PROSITE-ProRule" id="PRU00498"/>
    </source>
</evidence>
<evidence type="ECO:0000256" key="5">
    <source>
        <dbReference type="SAM" id="MobiDB-lite"/>
    </source>
</evidence>
<evidence type="ECO:0000269" key="6">
    <source>
    </source>
</evidence>
<evidence type="ECO:0000269" key="7">
    <source>
    </source>
</evidence>
<evidence type="ECO:0000269" key="8">
    <source>
    </source>
</evidence>
<evidence type="ECO:0000303" key="9">
    <source>
    </source>
</evidence>
<evidence type="ECO:0000305" key="10"/>
<evidence type="ECO:0000305" key="11">
    <source>
    </source>
</evidence>
<keyword id="KW-0067">ATP-binding</keyword>
<keyword id="KW-1003">Cell membrane</keyword>
<keyword id="KW-0325">Glycoprotein</keyword>
<keyword id="KW-0472">Membrane</keyword>
<keyword id="KW-0547">Nucleotide-binding</keyword>
<keyword id="KW-1185">Reference proteome</keyword>
<keyword id="KW-0677">Repeat</keyword>
<keyword id="KW-0812">Transmembrane</keyword>
<keyword id="KW-1133">Transmembrane helix</keyword>
<keyword id="KW-0813">Transport</keyword>
<proteinExistence type="evidence at protein level"/>
<name>MDR2_TRIRC</name>
<accession>F2T1C4</accession>
<feature type="chain" id="PRO_0000447178" description="ABC multidrug transporter MDR2">
    <location>
        <begin position="1"/>
        <end position="1331"/>
    </location>
</feature>
<feature type="transmembrane region" description="Helical" evidence="1 3">
    <location>
        <begin position="93"/>
        <end position="113"/>
    </location>
</feature>
<feature type="transmembrane region" description="Helical" evidence="1 3">
    <location>
        <begin position="147"/>
        <end position="167"/>
    </location>
</feature>
<feature type="transmembrane region" description="Helical" evidence="1 3">
    <location>
        <begin position="219"/>
        <end position="239"/>
    </location>
</feature>
<feature type="transmembrane region" description="Helical" evidence="1 3">
    <location>
        <begin position="242"/>
        <end position="262"/>
    </location>
</feature>
<feature type="transmembrane region" description="Helical" evidence="1 3">
    <location>
        <begin position="325"/>
        <end position="345"/>
    </location>
</feature>
<feature type="transmembrane region" description="Helical" evidence="1 3">
    <location>
        <begin position="358"/>
        <end position="378"/>
    </location>
</feature>
<feature type="transmembrane region" description="Helical" evidence="1 3">
    <location>
        <begin position="762"/>
        <end position="782"/>
    </location>
</feature>
<feature type="transmembrane region" description="Helical" evidence="1 3">
    <location>
        <begin position="808"/>
        <end position="828"/>
    </location>
</feature>
<feature type="transmembrane region" description="Helical" evidence="1 3">
    <location>
        <begin position="884"/>
        <end position="904"/>
    </location>
</feature>
<feature type="transmembrane region" description="Helical" evidence="1 3">
    <location>
        <begin position="910"/>
        <end position="930"/>
    </location>
</feature>
<feature type="transmembrane region" description="Helical" evidence="1 3">
    <location>
        <begin position="995"/>
        <end position="1015"/>
    </location>
</feature>
<feature type="transmembrane region" description="Helical" evidence="1 3">
    <location>
        <begin position="1025"/>
        <end position="1045"/>
    </location>
</feature>
<feature type="domain" description="ABC transmembrane type-1 1" evidence="3">
    <location>
        <begin position="97"/>
        <end position="387"/>
    </location>
</feature>
<feature type="domain" description="ABC transporter 1" evidence="2">
    <location>
        <begin position="422"/>
        <end position="667"/>
    </location>
</feature>
<feature type="domain" description="ABC transmembrane type-1 2" evidence="3">
    <location>
        <begin position="764"/>
        <end position="1051"/>
    </location>
</feature>
<feature type="domain" description="ABC transporter 2" evidence="2">
    <location>
        <begin position="1086"/>
        <end position="1324"/>
    </location>
</feature>
<feature type="region of interest" description="Disordered" evidence="5">
    <location>
        <begin position="1"/>
        <end position="50"/>
    </location>
</feature>
<feature type="compositionally biased region" description="Basic and acidic residues" evidence="5">
    <location>
        <begin position="31"/>
        <end position="41"/>
    </location>
</feature>
<feature type="binding site" evidence="2">
    <location>
        <begin position="457"/>
        <end position="464"/>
    </location>
    <ligand>
        <name>ATP</name>
        <dbReference type="ChEBI" id="CHEBI:30616"/>
    </ligand>
</feature>
<feature type="binding site" evidence="2">
    <location>
        <begin position="1121"/>
        <end position="1128"/>
    </location>
    <ligand>
        <name>ATP</name>
        <dbReference type="ChEBI" id="CHEBI:30616"/>
    </ligand>
</feature>
<feature type="glycosylation site" description="N-linked (GlcNAc...) asparagine" evidence="4">
    <location>
        <position position="293"/>
    </location>
</feature>
<feature type="glycosylation site" description="N-linked (GlcNAc...) asparagine" evidence="4">
    <location>
        <position position="529"/>
    </location>
</feature>
<feature type="glycosylation site" description="N-linked (GlcNAc...) asparagine" evidence="4">
    <location>
        <position position="860"/>
    </location>
</feature>
<feature type="glycosylation site" description="N-linked (GlcNAc...) asparagine" evidence="4">
    <location>
        <position position="1108"/>
    </location>
</feature>
<gene>
    <name evidence="9" type="primary">MDR2</name>
    <name type="ORF">TERG_08613</name>
</gene>
<organism>
    <name type="scientific">Trichophyton rubrum (strain ATCC MYA-4607 / CBS 118892)</name>
    <name type="common">Athlete's foot fungus</name>
    <dbReference type="NCBI Taxonomy" id="559305"/>
    <lineage>
        <taxon>Eukaryota</taxon>
        <taxon>Fungi</taxon>
        <taxon>Dikarya</taxon>
        <taxon>Ascomycota</taxon>
        <taxon>Pezizomycotina</taxon>
        <taxon>Eurotiomycetes</taxon>
        <taxon>Eurotiomycetidae</taxon>
        <taxon>Onygenales</taxon>
        <taxon>Arthrodermataceae</taxon>
        <taxon>Trichophyton</taxon>
    </lineage>
</organism>
<dbReference type="EMBL" id="GG700664">
    <property type="protein sequence ID" value="EGD92396.1"/>
    <property type="molecule type" value="Genomic_DNA"/>
</dbReference>
<dbReference type="RefSeq" id="XP_003230907.1">
    <property type="nucleotide sequence ID" value="XM_003230859.1"/>
</dbReference>
<dbReference type="SMR" id="F2T1C4"/>
<dbReference type="STRING" id="559305.F2T1C4"/>
<dbReference type="GlyCosmos" id="F2T1C4">
    <property type="glycosylation" value="4 sites, No reported glycans"/>
</dbReference>
<dbReference type="GeneID" id="10376855"/>
<dbReference type="VEuPathDB" id="FungiDB:TERG_08613"/>
<dbReference type="eggNOG" id="KOG0055">
    <property type="taxonomic scope" value="Eukaryota"/>
</dbReference>
<dbReference type="HOGENOM" id="CLU_000604_17_2_1"/>
<dbReference type="InParanoid" id="F2T1C4"/>
<dbReference type="OMA" id="IGMAAPY"/>
<dbReference type="OrthoDB" id="6500128at2759"/>
<dbReference type="Proteomes" id="UP000008864">
    <property type="component" value="Unassembled WGS sequence"/>
</dbReference>
<dbReference type="GO" id="GO:0005743">
    <property type="term" value="C:mitochondrial inner membrane"/>
    <property type="evidence" value="ECO:0007669"/>
    <property type="project" value="TreeGrafter"/>
</dbReference>
<dbReference type="GO" id="GO:0005886">
    <property type="term" value="C:plasma membrane"/>
    <property type="evidence" value="ECO:0007669"/>
    <property type="project" value="UniProtKB-SubCell"/>
</dbReference>
<dbReference type="GO" id="GO:0015421">
    <property type="term" value="F:ABC-type oligopeptide transporter activity"/>
    <property type="evidence" value="ECO:0007669"/>
    <property type="project" value="TreeGrafter"/>
</dbReference>
<dbReference type="GO" id="GO:0005524">
    <property type="term" value="F:ATP binding"/>
    <property type="evidence" value="ECO:0007669"/>
    <property type="project" value="UniProtKB-KW"/>
</dbReference>
<dbReference type="GO" id="GO:0016887">
    <property type="term" value="F:ATP hydrolysis activity"/>
    <property type="evidence" value="ECO:0007669"/>
    <property type="project" value="InterPro"/>
</dbReference>
<dbReference type="GO" id="GO:0090374">
    <property type="term" value="P:oligopeptide export from mitochondrion"/>
    <property type="evidence" value="ECO:0007669"/>
    <property type="project" value="TreeGrafter"/>
</dbReference>
<dbReference type="CDD" id="cd18577">
    <property type="entry name" value="ABC_6TM_Pgp_ABCB1_D1_like"/>
    <property type="match status" value="1"/>
</dbReference>
<dbReference type="CDD" id="cd18578">
    <property type="entry name" value="ABC_6TM_Pgp_ABCB1_D2_like"/>
    <property type="match status" value="1"/>
</dbReference>
<dbReference type="CDD" id="cd03249">
    <property type="entry name" value="ABC_MTABC3_MDL1_MDL2"/>
    <property type="match status" value="2"/>
</dbReference>
<dbReference type="FunFam" id="1.20.1560.10:FF:000102">
    <property type="entry name" value="ABC multidrug transporter Mdr1"/>
    <property type="match status" value="1"/>
</dbReference>
<dbReference type="FunFam" id="1.20.1560.10:FF:000009">
    <property type="entry name" value="ABC transporter B family member 1"/>
    <property type="match status" value="1"/>
</dbReference>
<dbReference type="FunFam" id="3.40.50.300:FF:000251">
    <property type="entry name" value="ABC transporter B family member 19"/>
    <property type="match status" value="1"/>
</dbReference>
<dbReference type="FunFam" id="3.40.50.300:FF:000302">
    <property type="entry name" value="ATP-binding cassette subfamily B member 5"/>
    <property type="match status" value="1"/>
</dbReference>
<dbReference type="Gene3D" id="1.20.1560.10">
    <property type="entry name" value="ABC transporter type 1, transmembrane domain"/>
    <property type="match status" value="1"/>
</dbReference>
<dbReference type="Gene3D" id="3.40.50.300">
    <property type="entry name" value="P-loop containing nucleotide triphosphate hydrolases"/>
    <property type="match status" value="2"/>
</dbReference>
<dbReference type="InterPro" id="IPR003593">
    <property type="entry name" value="AAA+_ATPase"/>
</dbReference>
<dbReference type="InterPro" id="IPR011527">
    <property type="entry name" value="ABC1_TM_dom"/>
</dbReference>
<dbReference type="InterPro" id="IPR036640">
    <property type="entry name" value="ABC1_TM_sf"/>
</dbReference>
<dbReference type="InterPro" id="IPR003439">
    <property type="entry name" value="ABC_transporter-like_ATP-bd"/>
</dbReference>
<dbReference type="InterPro" id="IPR017871">
    <property type="entry name" value="ABC_transporter-like_CS"/>
</dbReference>
<dbReference type="InterPro" id="IPR027417">
    <property type="entry name" value="P-loop_NTPase"/>
</dbReference>
<dbReference type="InterPro" id="IPR039421">
    <property type="entry name" value="Type_1_exporter"/>
</dbReference>
<dbReference type="PANTHER" id="PTHR43394:SF1">
    <property type="entry name" value="ATP-BINDING CASSETTE SUB-FAMILY B MEMBER 10, MITOCHONDRIAL"/>
    <property type="match status" value="1"/>
</dbReference>
<dbReference type="PANTHER" id="PTHR43394">
    <property type="entry name" value="ATP-DEPENDENT PERMEASE MDL1, MITOCHONDRIAL"/>
    <property type="match status" value="1"/>
</dbReference>
<dbReference type="Pfam" id="PF00664">
    <property type="entry name" value="ABC_membrane"/>
    <property type="match status" value="2"/>
</dbReference>
<dbReference type="Pfam" id="PF00005">
    <property type="entry name" value="ABC_tran"/>
    <property type="match status" value="2"/>
</dbReference>
<dbReference type="SMART" id="SM00382">
    <property type="entry name" value="AAA"/>
    <property type="match status" value="2"/>
</dbReference>
<dbReference type="SUPFAM" id="SSF90123">
    <property type="entry name" value="ABC transporter transmembrane region"/>
    <property type="match status" value="2"/>
</dbReference>
<dbReference type="SUPFAM" id="SSF52540">
    <property type="entry name" value="P-loop containing nucleoside triphosphate hydrolases"/>
    <property type="match status" value="2"/>
</dbReference>
<dbReference type="PROSITE" id="PS50929">
    <property type="entry name" value="ABC_TM1F"/>
    <property type="match status" value="2"/>
</dbReference>
<dbReference type="PROSITE" id="PS00211">
    <property type="entry name" value="ABC_TRANSPORTER_1"/>
    <property type="match status" value="2"/>
</dbReference>
<dbReference type="PROSITE" id="PS50893">
    <property type="entry name" value="ABC_TRANSPORTER_2"/>
    <property type="match status" value="2"/>
</dbReference>
<sequence>MVEPSEKPNTQNDDVSKQEIRNPVSSSSSTSDKEKVAKKGNSDATKSLTPEDLDAQLAHLPEHEREILKQQLFIPEVKATYGTLFRYATRNDMILLAIVSLASIAAGAALPLFTVLFGSLAGTFRDIALHRITYDEFNSILTRNSLYFVYLGIAQFILLYVSTVGFIYVGEHITQKIRARYLHAILRQNIGFFDKLGAGEVTTRITADTNLIQDGISEKVGLTLTALSTFFSAFIIGYVRYWKLALICTSTIVAMVLVMGGISRFVVKSGRMTLVSYGEGGTVAEEVISSIRNATAFGTQEKLARQYEVHLREARKWGRRLQMMLGIMFGSMMAIMYSNYGLGFWMGSRFLVGGETDLSAIVNILLAIVIGSFSIGNVAPNTQAFASAISAGAKIFSTIDRVSAIDPGSDEGDTIENVEGTIEFRGIKHIYPSRPEVVVMEDINLVVPKGKTTALVGPSGSGKSTVVGLLERFYNPVAGSVFLDGRDIKTLNLRWLRQQISLVSQEPTLFGTTIFENIRLGLIGSPMENESEEQIKERIVSAAKEANAHDFVMGLPDGYATDVGQRGFLLSGGQKQRIAIARAIVSDPKILLLDEATSALDTKSEGVVQAALDAASRGRTTIVIAHRLSTIKSADNIVVIVGGRIAEQGTHDELVDKKGTYLQLVEAQKINEERGEESEDEAVLEKEKEISRQISVPAKSVNSGKYPDEDVEANLGRIDTKKSLSSVILSQKRGQEKETEYSLGTLIRFIAGFNKPERLIMLCGFFFAVLSGAGQPVQSVFFAKGITTLSLPPSLYGKLREDANFWSLMFLMLGLVQLITQSAQGVIFALCSESLIYRARSKSFRAMLRQDIAFFDLSENSTGALTSFLSTETKHLSGVSGATLGTILMVSTTLIVALTVALAFGWKLALVCISTVPVLLLCGFYRFWILAQFQTRAKKAYESSASYACEATSSIRTVASLTRENGVMEIYEGQLNDQAKKSLRSVAKSSLLYAASQSFSFFCLALGFWYGGGLLGKGEYNAFQFFLCISCVIFGSQSAGIVFSFSPDMGKAKSAAADFKRLFDRVPTIDIESPDGEKLETVEGTIEFRDVHFRYPTRPEQPVLRGLNLTVKPGQYIALVGPSGCGKSTTIALVERFYDTLSGGVYIDGKDISRLNVNSYRSHLALVSQEPTLYQGTIRDNVLLGVDRDDVPDEQVFAACKAANIYDFIMSLPDGFATVVGSKGSMLSGGQKQRIAIARALIRDPKVLLLDEATSALDSESEKVVQAALDAAAKGRTTIAVAHRLSTIQKADIIYVFDQGRIVESGTHHELLQNKGRYYELVHMQSLEKTH</sequence>